<dbReference type="EC" id="6.3.2.9" evidence="1"/>
<dbReference type="EMBL" id="CP001019">
    <property type="protein sequence ID" value="ACJ19132.1"/>
    <property type="molecule type" value="Genomic_DNA"/>
</dbReference>
<dbReference type="RefSeq" id="WP_010957395.1">
    <property type="nucleotide sequence ID" value="NC_011527.1"/>
</dbReference>
<dbReference type="SMR" id="B6J2Q5"/>
<dbReference type="KEGG" id="cbg:CbuG_1884"/>
<dbReference type="HOGENOM" id="CLU_032540_1_0_6"/>
<dbReference type="UniPathway" id="UPA00219"/>
<dbReference type="GO" id="GO:0005737">
    <property type="term" value="C:cytoplasm"/>
    <property type="evidence" value="ECO:0007669"/>
    <property type="project" value="UniProtKB-SubCell"/>
</dbReference>
<dbReference type="GO" id="GO:0005524">
    <property type="term" value="F:ATP binding"/>
    <property type="evidence" value="ECO:0007669"/>
    <property type="project" value="UniProtKB-UniRule"/>
</dbReference>
<dbReference type="GO" id="GO:0008764">
    <property type="term" value="F:UDP-N-acetylmuramoylalanine-D-glutamate ligase activity"/>
    <property type="evidence" value="ECO:0007669"/>
    <property type="project" value="UniProtKB-UniRule"/>
</dbReference>
<dbReference type="GO" id="GO:0051301">
    <property type="term" value="P:cell division"/>
    <property type="evidence" value="ECO:0007669"/>
    <property type="project" value="UniProtKB-KW"/>
</dbReference>
<dbReference type="GO" id="GO:0071555">
    <property type="term" value="P:cell wall organization"/>
    <property type="evidence" value="ECO:0007669"/>
    <property type="project" value="UniProtKB-KW"/>
</dbReference>
<dbReference type="GO" id="GO:0009252">
    <property type="term" value="P:peptidoglycan biosynthetic process"/>
    <property type="evidence" value="ECO:0007669"/>
    <property type="project" value="UniProtKB-UniRule"/>
</dbReference>
<dbReference type="GO" id="GO:0008360">
    <property type="term" value="P:regulation of cell shape"/>
    <property type="evidence" value="ECO:0007669"/>
    <property type="project" value="UniProtKB-KW"/>
</dbReference>
<dbReference type="Gene3D" id="3.90.190.20">
    <property type="entry name" value="Mur ligase, C-terminal domain"/>
    <property type="match status" value="1"/>
</dbReference>
<dbReference type="Gene3D" id="3.40.1190.10">
    <property type="entry name" value="Mur-like, catalytic domain"/>
    <property type="match status" value="1"/>
</dbReference>
<dbReference type="Gene3D" id="3.40.50.720">
    <property type="entry name" value="NAD(P)-binding Rossmann-like Domain"/>
    <property type="match status" value="1"/>
</dbReference>
<dbReference type="HAMAP" id="MF_00639">
    <property type="entry name" value="MurD"/>
    <property type="match status" value="1"/>
</dbReference>
<dbReference type="InterPro" id="IPR036565">
    <property type="entry name" value="Mur-like_cat_sf"/>
</dbReference>
<dbReference type="InterPro" id="IPR004101">
    <property type="entry name" value="Mur_ligase_C"/>
</dbReference>
<dbReference type="InterPro" id="IPR036615">
    <property type="entry name" value="Mur_ligase_C_dom_sf"/>
</dbReference>
<dbReference type="InterPro" id="IPR013221">
    <property type="entry name" value="Mur_ligase_cen"/>
</dbReference>
<dbReference type="InterPro" id="IPR005762">
    <property type="entry name" value="MurD"/>
</dbReference>
<dbReference type="NCBIfam" id="TIGR01087">
    <property type="entry name" value="murD"/>
    <property type="match status" value="1"/>
</dbReference>
<dbReference type="PANTHER" id="PTHR43692">
    <property type="entry name" value="UDP-N-ACETYLMURAMOYLALANINE--D-GLUTAMATE LIGASE"/>
    <property type="match status" value="1"/>
</dbReference>
<dbReference type="PANTHER" id="PTHR43692:SF1">
    <property type="entry name" value="UDP-N-ACETYLMURAMOYLALANINE--D-GLUTAMATE LIGASE"/>
    <property type="match status" value="1"/>
</dbReference>
<dbReference type="Pfam" id="PF02875">
    <property type="entry name" value="Mur_ligase_C"/>
    <property type="match status" value="1"/>
</dbReference>
<dbReference type="Pfam" id="PF08245">
    <property type="entry name" value="Mur_ligase_M"/>
    <property type="match status" value="1"/>
</dbReference>
<dbReference type="Pfam" id="PF21799">
    <property type="entry name" value="MurD-like_N"/>
    <property type="match status" value="1"/>
</dbReference>
<dbReference type="SUPFAM" id="SSF51984">
    <property type="entry name" value="MurCD N-terminal domain"/>
    <property type="match status" value="1"/>
</dbReference>
<dbReference type="SUPFAM" id="SSF53623">
    <property type="entry name" value="MurD-like peptide ligases, catalytic domain"/>
    <property type="match status" value="1"/>
</dbReference>
<dbReference type="SUPFAM" id="SSF53244">
    <property type="entry name" value="MurD-like peptide ligases, peptide-binding domain"/>
    <property type="match status" value="1"/>
</dbReference>
<keyword id="KW-0067">ATP-binding</keyword>
<keyword id="KW-0131">Cell cycle</keyword>
<keyword id="KW-0132">Cell division</keyword>
<keyword id="KW-0133">Cell shape</keyword>
<keyword id="KW-0961">Cell wall biogenesis/degradation</keyword>
<keyword id="KW-0963">Cytoplasm</keyword>
<keyword id="KW-0436">Ligase</keyword>
<keyword id="KW-0547">Nucleotide-binding</keyword>
<keyword id="KW-0573">Peptidoglycan synthesis</keyword>
<gene>
    <name evidence="1" type="primary">murD</name>
    <name type="ordered locus">CbuG_1884</name>
</gene>
<accession>B6J2Q5</accession>
<evidence type="ECO:0000255" key="1">
    <source>
        <dbReference type="HAMAP-Rule" id="MF_00639"/>
    </source>
</evidence>
<sequence length="442" mass="48773">MSSESLTVIVGLGKTGLSCAQFLAAKNQPFAVMDSREEPPEWENFIKTYPRVELIRGQFSEKLLNEAQEIILSPGVSLQEPLIAKQAAQGKSIIGDIELFARNVNKPIIAITGSNGKTTVTTVVGLMMKAAGRNVSVCGNIGEPVLEQITPEPDYYVLELSSFQLETTFSLRSQAATILNISEDHMNRYATLQDYLRAKQRIYTDCFIPIVNADEPEIWRHLPFNKKPLSFGLNNAADFSLAEHNQKTSIAYQGKILMPIQELKLNARHHLQNALAALALGTAAKIPIENMLHVLRDFSGIRHRCQWVRKYKEIDYYNDSKGTNVGATRAAIESLGQAAKGQLILIAGGQGKGADFSPLKDVVKRYVKQVILIGEDAPLLEKTLKEITVIKHADSMNEAVKRSTQAAKAGDIVLLSPACASFDMFTNYEHRGDVFTETVEAL</sequence>
<proteinExistence type="inferred from homology"/>
<comment type="function">
    <text evidence="1">Cell wall formation. Catalyzes the addition of glutamate to the nucleotide precursor UDP-N-acetylmuramoyl-L-alanine (UMA).</text>
</comment>
<comment type="catalytic activity">
    <reaction evidence="1">
        <text>UDP-N-acetyl-alpha-D-muramoyl-L-alanine + D-glutamate + ATP = UDP-N-acetyl-alpha-D-muramoyl-L-alanyl-D-glutamate + ADP + phosphate + H(+)</text>
        <dbReference type="Rhea" id="RHEA:16429"/>
        <dbReference type="ChEBI" id="CHEBI:15378"/>
        <dbReference type="ChEBI" id="CHEBI:29986"/>
        <dbReference type="ChEBI" id="CHEBI:30616"/>
        <dbReference type="ChEBI" id="CHEBI:43474"/>
        <dbReference type="ChEBI" id="CHEBI:83898"/>
        <dbReference type="ChEBI" id="CHEBI:83900"/>
        <dbReference type="ChEBI" id="CHEBI:456216"/>
        <dbReference type="EC" id="6.3.2.9"/>
    </reaction>
</comment>
<comment type="pathway">
    <text evidence="1">Cell wall biogenesis; peptidoglycan biosynthesis.</text>
</comment>
<comment type="subcellular location">
    <subcellularLocation>
        <location evidence="1">Cytoplasm</location>
    </subcellularLocation>
</comment>
<comment type="similarity">
    <text evidence="1">Belongs to the MurCDEF family.</text>
</comment>
<protein>
    <recommendedName>
        <fullName evidence="1">UDP-N-acetylmuramoylalanine--D-glutamate ligase</fullName>
        <ecNumber evidence="1">6.3.2.9</ecNumber>
    </recommendedName>
    <alternativeName>
        <fullName evidence="1">D-glutamic acid-adding enzyme</fullName>
    </alternativeName>
    <alternativeName>
        <fullName evidence="1">UDP-N-acetylmuramoyl-L-alanyl-D-glutamate synthetase</fullName>
    </alternativeName>
</protein>
<feature type="chain" id="PRO_1000130849" description="UDP-N-acetylmuramoylalanine--D-glutamate ligase">
    <location>
        <begin position="1"/>
        <end position="442"/>
    </location>
</feature>
<feature type="binding site" evidence="1">
    <location>
        <begin position="113"/>
        <end position="119"/>
    </location>
    <ligand>
        <name>ATP</name>
        <dbReference type="ChEBI" id="CHEBI:30616"/>
    </ligand>
</feature>
<name>MURD_COXB2</name>
<organism>
    <name type="scientific">Coxiella burnetii (strain CbuG_Q212)</name>
    <name type="common">Coxiella burnetii (strain Q212)</name>
    <dbReference type="NCBI Taxonomy" id="434923"/>
    <lineage>
        <taxon>Bacteria</taxon>
        <taxon>Pseudomonadati</taxon>
        <taxon>Pseudomonadota</taxon>
        <taxon>Gammaproteobacteria</taxon>
        <taxon>Legionellales</taxon>
        <taxon>Coxiellaceae</taxon>
        <taxon>Coxiella</taxon>
    </lineage>
</organism>
<reference key="1">
    <citation type="journal article" date="2009" name="Infect. Immun.">
        <title>Comparative genomics reveal extensive transposon-mediated genomic plasticity and diversity among potential effector proteins within the genus Coxiella.</title>
        <authorList>
            <person name="Beare P.A."/>
            <person name="Unsworth N."/>
            <person name="Andoh M."/>
            <person name="Voth D.E."/>
            <person name="Omsland A."/>
            <person name="Gilk S.D."/>
            <person name="Williams K.P."/>
            <person name="Sobral B.W."/>
            <person name="Kupko J.J. III"/>
            <person name="Porcella S.F."/>
            <person name="Samuel J.E."/>
            <person name="Heinzen R.A."/>
        </authorList>
    </citation>
    <scope>NUCLEOTIDE SEQUENCE [LARGE SCALE GENOMIC DNA]</scope>
    <source>
        <strain>CbuG_Q212</strain>
    </source>
</reference>